<organismHost>
    <name type="scientific">Homo sapiens</name>
    <name type="common">Human</name>
    <dbReference type="NCBI Taxonomy" id="9606"/>
</organismHost>
<organism>
    <name type="scientific">Human herpesvirus 1 (strain 17)</name>
    <name type="common">HHV-1</name>
    <name type="synonym">Human herpes simplex virus 1</name>
    <dbReference type="NCBI Taxonomy" id="10299"/>
    <lineage>
        <taxon>Viruses</taxon>
        <taxon>Duplodnaviria</taxon>
        <taxon>Heunggongvirae</taxon>
        <taxon>Peploviricota</taxon>
        <taxon>Herviviricetes</taxon>
        <taxon>Herpesvirales</taxon>
        <taxon>Orthoherpesviridae</taxon>
        <taxon>Alphaherpesvirinae</taxon>
        <taxon>Simplexvirus</taxon>
        <taxon>Simplexvirus humanalpha1</taxon>
        <taxon>Human herpesvirus 1</taxon>
    </lineage>
</organism>
<feature type="chain" id="PRO_0000115743" description="Major DNA-binding protein">
    <location>
        <begin position="1"/>
        <end position="1196"/>
    </location>
</feature>
<feature type="zinc finger region" evidence="1">
    <location>
        <begin position="499"/>
        <end position="512"/>
    </location>
</feature>
<feature type="region of interest" description="Disordered" evidence="2">
    <location>
        <begin position="1158"/>
        <end position="1196"/>
    </location>
</feature>
<feature type="region of interest" description="Required for nuclear localization" evidence="1">
    <location>
        <begin position="1170"/>
        <end position="1196"/>
    </location>
</feature>
<feature type="short sequence motif" description="Required for filament formation" evidence="1">
    <location>
        <begin position="843"/>
        <end position="844"/>
    </location>
</feature>
<feature type="short sequence motif" description="Required for filament formation" evidence="1">
    <location>
        <begin position="1142"/>
        <end position="1144"/>
    </location>
</feature>
<feature type="compositionally biased region" description="Basic and acidic residues" evidence="2">
    <location>
        <begin position="1174"/>
        <end position="1196"/>
    </location>
</feature>
<feature type="sequence variant" description="In strain: Nonneuroinvasive mutant HF10.">
    <original>S</original>
    <variation>A</variation>
    <location>
        <position position="44"/>
    </location>
</feature>
<feature type="sequence variant" description="In strain: Nonneuroinvasive mutant HF10 and 17 syn+.">
    <original>K</original>
    <variation>N</variation>
    <location>
        <position position="224"/>
    </location>
</feature>
<feature type="sequence variant" description="In strain: Nonneuroinvasive mutant HF10 and 17 syn+.">
    <original>A</original>
    <variation>P</variation>
    <location>
        <position position="306"/>
    </location>
</feature>
<feature type="sequence variant" description="In strain: Nonneuroinvasive mutant HF10.">
    <original>V</original>
    <variation>A</variation>
    <location>
        <position position="428"/>
    </location>
</feature>
<feature type="sequence variant" description="In strain: Nonneuroinvasive mutant HF10 and 17 syn+.">
    <original>A</original>
    <variation>G</variation>
    <location>
        <position position="475"/>
    </location>
</feature>
<feature type="sequence variant" description="In strain: Nonneuroinvasive mutant HF10.">
    <original>A</original>
    <variation>T</variation>
    <location>
        <position position="964"/>
    </location>
</feature>
<feature type="strand" evidence="10">
    <location>
        <begin position="18"/>
        <end position="25"/>
    </location>
</feature>
<feature type="helix" evidence="10">
    <location>
        <begin position="31"/>
        <end position="37"/>
    </location>
</feature>
<feature type="strand" evidence="10">
    <location>
        <begin position="47"/>
        <end position="50"/>
    </location>
</feature>
<feature type="strand" evidence="10">
    <location>
        <begin position="64"/>
        <end position="73"/>
    </location>
</feature>
<feature type="strand" evidence="10">
    <location>
        <begin position="81"/>
        <end position="90"/>
    </location>
</feature>
<feature type="strand" evidence="10">
    <location>
        <begin position="92"/>
        <end position="98"/>
    </location>
</feature>
<feature type="helix" evidence="10">
    <location>
        <begin position="100"/>
        <end position="102"/>
    </location>
</feature>
<feature type="helix" evidence="10">
    <location>
        <begin position="112"/>
        <end position="123"/>
    </location>
</feature>
<feature type="helix" evidence="10">
    <location>
        <begin position="132"/>
        <end position="137"/>
    </location>
</feature>
<feature type="helix" evidence="10">
    <location>
        <begin position="141"/>
        <end position="148"/>
    </location>
</feature>
<feature type="strand" evidence="10">
    <location>
        <begin position="154"/>
        <end position="162"/>
    </location>
</feature>
<feature type="turn" evidence="10">
    <location>
        <begin position="163"/>
        <end position="165"/>
    </location>
</feature>
<feature type="helix" evidence="10">
    <location>
        <begin position="166"/>
        <end position="170"/>
    </location>
</feature>
<feature type="strand" evidence="10">
    <location>
        <begin position="174"/>
        <end position="176"/>
    </location>
</feature>
<feature type="helix" evidence="10">
    <location>
        <begin position="178"/>
        <end position="180"/>
    </location>
</feature>
<feature type="strand" evidence="10">
    <location>
        <begin position="182"/>
        <end position="186"/>
    </location>
</feature>
<feature type="strand" evidence="10">
    <location>
        <begin position="189"/>
        <end position="198"/>
    </location>
</feature>
<feature type="helix" evidence="10">
    <location>
        <begin position="199"/>
        <end position="202"/>
    </location>
</feature>
<feature type="helix" evidence="10">
    <location>
        <begin position="234"/>
        <end position="243"/>
    </location>
</feature>
<feature type="helix" evidence="10">
    <location>
        <begin position="245"/>
        <end position="251"/>
    </location>
</feature>
<feature type="helix" evidence="10">
    <location>
        <begin position="257"/>
        <end position="269"/>
    </location>
</feature>
<feature type="helix" evidence="10">
    <location>
        <begin position="310"/>
        <end position="331"/>
    </location>
</feature>
<feature type="helix" evidence="10">
    <location>
        <begin position="342"/>
        <end position="344"/>
    </location>
</feature>
<feature type="helix" evidence="10">
    <location>
        <begin position="346"/>
        <end position="348"/>
    </location>
</feature>
<feature type="strand" evidence="10">
    <location>
        <begin position="353"/>
        <end position="355"/>
    </location>
</feature>
<feature type="helix" evidence="10">
    <location>
        <begin position="358"/>
        <end position="377"/>
    </location>
</feature>
<feature type="turn" evidence="10">
    <location>
        <begin position="382"/>
        <end position="384"/>
    </location>
</feature>
<feature type="strand" evidence="10">
    <location>
        <begin position="385"/>
        <end position="390"/>
    </location>
</feature>
<feature type="strand" evidence="10">
    <location>
        <begin position="406"/>
        <end position="411"/>
    </location>
</feature>
<feature type="turn" evidence="10">
    <location>
        <begin position="413"/>
        <end position="417"/>
    </location>
</feature>
<feature type="turn" evidence="10">
    <location>
        <begin position="430"/>
        <end position="433"/>
    </location>
</feature>
<feature type="helix" evidence="10">
    <location>
        <begin position="448"/>
        <end position="454"/>
    </location>
</feature>
<feature type="turn" evidence="10">
    <location>
        <begin position="455"/>
        <end position="457"/>
    </location>
</feature>
<feature type="helix" evidence="10">
    <location>
        <begin position="459"/>
        <end position="469"/>
    </location>
</feature>
<feature type="helix" evidence="10">
    <location>
        <begin position="485"/>
        <end position="490"/>
    </location>
</feature>
<feature type="turn" evidence="10">
    <location>
        <begin position="491"/>
        <end position="494"/>
    </location>
</feature>
<feature type="turn" evidence="10">
    <location>
        <begin position="504"/>
        <end position="509"/>
    </location>
</feature>
<feature type="helix" evidence="10">
    <location>
        <begin position="511"/>
        <end position="517"/>
    </location>
</feature>
<feature type="helix" evidence="10">
    <location>
        <begin position="519"/>
        <end position="521"/>
    </location>
</feature>
<feature type="strand" evidence="10">
    <location>
        <begin position="533"/>
        <end position="538"/>
    </location>
</feature>
<feature type="helix" evidence="10">
    <location>
        <begin position="575"/>
        <end position="588"/>
    </location>
</feature>
<feature type="helix" evidence="10">
    <location>
        <begin position="603"/>
        <end position="606"/>
    </location>
</feature>
<feature type="helix" evidence="10">
    <location>
        <begin position="610"/>
        <end position="636"/>
    </location>
</feature>
<feature type="helix" evidence="10">
    <location>
        <begin position="643"/>
        <end position="647"/>
    </location>
</feature>
<feature type="strand" evidence="10">
    <location>
        <begin position="651"/>
        <end position="657"/>
    </location>
</feature>
<feature type="helix" evidence="10">
    <location>
        <begin position="667"/>
        <end position="693"/>
    </location>
</feature>
<feature type="helix" evidence="10">
    <location>
        <begin position="703"/>
        <end position="716"/>
    </location>
</feature>
<feature type="turn" evidence="10">
    <location>
        <begin position="717"/>
        <end position="720"/>
    </location>
</feature>
<feature type="strand" evidence="10">
    <location>
        <begin position="721"/>
        <end position="731"/>
    </location>
</feature>
<feature type="turn" evidence="10">
    <location>
        <begin position="744"/>
        <end position="746"/>
    </location>
</feature>
<feature type="strand" evidence="10">
    <location>
        <begin position="748"/>
        <end position="750"/>
    </location>
</feature>
<feature type="strand" evidence="10">
    <location>
        <begin position="759"/>
        <end position="761"/>
    </location>
</feature>
<feature type="strand" evidence="10">
    <location>
        <begin position="764"/>
        <end position="777"/>
    </location>
</feature>
<feature type="helix" evidence="10">
    <location>
        <begin position="810"/>
        <end position="812"/>
    </location>
</feature>
<feature type="helix" evidence="10">
    <location>
        <begin position="816"/>
        <end position="821"/>
    </location>
</feature>
<feature type="helix" evidence="10">
    <location>
        <begin position="823"/>
        <end position="826"/>
    </location>
</feature>
<feature type="helix" evidence="10">
    <location>
        <begin position="840"/>
        <end position="849"/>
    </location>
</feature>
<feature type="helix" evidence="10">
    <location>
        <begin position="861"/>
        <end position="878"/>
    </location>
</feature>
<feature type="helix" evidence="10">
    <location>
        <begin position="888"/>
        <end position="903"/>
    </location>
</feature>
<feature type="strand" evidence="10">
    <location>
        <begin position="913"/>
        <end position="923"/>
    </location>
</feature>
<feature type="strand" evidence="10">
    <location>
        <begin position="925"/>
        <end position="927"/>
    </location>
</feature>
<feature type="helix" evidence="10">
    <location>
        <begin position="928"/>
        <end position="933"/>
    </location>
</feature>
<feature type="helix" evidence="10">
    <location>
        <begin position="941"/>
        <end position="950"/>
    </location>
</feature>
<feature type="helix" evidence="10">
    <location>
        <begin position="951"/>
        <end position="954"/>
    </location>
</feature>
<feature type="strand" evidence="10">
    <location>
        <begin position="960"/>
        <end position="967"/>
    </location>
</feature>
<feature type="helix" evidence="10">
    <location>
        <begin position="969"/>
        <end position="974"/>
    </location>
</feature>
<feature type="strand" evidence="10">
    <location>
        <begin position="978"/>
        <end position="987"/>
    </location>
</feature>
<feature type="strand" evidence="10">
    <location>
        <begin position="999"/>
        <end position="1004"/>
    </location>
</feature>
<feature type="helix" evidence="10">
    <location>
        <begin position="1009"/>
        <end position="1011"/>
    </location>
</feature>
<feature type="strand" evidence="10">
    <location>
        <begin position="1022"/>
        <end position="1028"/>
    </location>
</feature>
<feature type="turn" evidence="10">
    <location>
        <begin position="1031"/>
        <end position="1033"/>
    </location>
</feature>
<feature type="helix" evidence="10">
    <location>
        <begin position="1049"/>
        <end position="1056"/>
    </location>
</feature>
<feature type="helix" evidence="10">
    <location>
        <begin position="1064"/>
        <end position="1073"/>
    </location>
</feature>
<feature type="helix" evidence="10">
    <location>
        <begin position="1078"/>
        <end position="1082"/>
    </location>
</feature>
<feature type="helix" evidence="10">
    <location>
        <begin position="1085"/>
        <end position="1091"/>
    </location>
</feature>
<feature type="helix" evidence="10">
    <location>
        <begin position="1095"/>
        <end position="1111"/>
    </location>
</feature>
<feature type="helix" evidence="10">
    <location>
        <begin position="1120"/>
        <end position="1125"/>
    </location>
</feature>
<evidence type="ECO:0000255" key="1">
    <source>
        <dbReference type="HAMAP-Rule" id="MF_04007"/>
    </source>
</evidence>
<evidence type="ECO:0000256" key="2">
    <source>
        <dbReference type="SAM" id="MobiDB-lite"/>
    </source>
</evidence>
<evidence type="ECO:0000269" key="3">
    <source>
    </source>
</evidence>
<evidence type="ECO:0000269" key="4">
    <source>
    </source>
</evidence>
<evidence type="ECO:0000269" key="5">
    <source>
    </source>
</evidence>
<evidence type="ECO:0000269" key="6">
    <source>
    </source>
</evidence>
<evidence type="ECO:0000269" key="7">
    <source>
    </source>
</evidence>
<evidence type="ECO:0000269" key="8">
    <source>
    </source>
</evidence>
<evidence type="ECO:0000269" key="9">
    <source>
    </source>
</evidence>
<evidence type="ECO:0007829" key="10">
    <source>
        <dbReference type="PDB" id="1URJ"/>
    </source>
</evidence>
<name>DNBI_HHV11</name>
<comment type="function">
    <text evidence="1 3 5 6 7 8">Plays several crucial roles in viral infection. Participates in the opening of the viral DNA origin to initiate replication by interacting with the origin-binding protein. May disrupt loops, hairpins and other secondary structures present on ssDNA to reduce and eliminate pausing of viral DNA polymerase at specific sites during elongation. Promotes viral DNA recombination by performing strand-transfer, characterized by the ability to transfer a DNA strand from a linear duplex to a complementary single-stranded DNA circle. Can also catalyze the renaturation of complementary single strands. Additionally, reorganizes the host cell nucleus, leading to the formation of prereplicative sites and replication compartments. This process is driven by the protein which can form double-helical filaments in the absence of DNA.</text>
</comment>
<comment type="subunit">
    <text evidence="1 3 4 5 6 7 8">Homooligomers. Forms double-helical filaments necessary for the formation of replication compartments within the host nucleus (PubMed:26676794). Interacts with the origin-binding protein (PubMed:7961904). Interacts with the helicase primase complex; this interaction stimulates primer synthesis activity of the helicase-primase complex (PubMed:9129659). Interacts with the DNA polymerase (PubMed:3031068). Interacts with the alkaline exonuclease; this interaction increases its nuclease processivity (PubMed:15078942). Interacts with ICP27; this interaction plays a role in the stimulation of late gene transcription (PubMed:15582656).</text>
</comment>
<comment type="subcellular location">
    <subcellularLocation>
        <location evidence="1 5 9">Host nucleus</location>
    </subcellularLocation>
    <text evidence="1">In the absence of DNA replication, found in the nuclear framework-associated structures (prereplicative sites). As viral DNA replication proceeds, it migrates to globular intranuclear structures (replication compartments).</text>
</comment>
<comment type="similarity">
    <text evidence="1">Belongs to the herpesviridae major DNA-binding protein family.</text>
</comment>
<reference key="1">
    <citation type="journal article" date="1985" name="Nucleic Acids Res.">
        <title>DNA sequence of the region in the genome of herpes simplex virus type 1 containing the genes for DNA polymerase and the major DNA binding protein.</title>
        <authorList>
            <person name="Quinn J.P."/>
            <person name="McGeoch D.J."/>
        </authorList>
    </citation>
    <scope>NUCLEOTIDE SEQUENCE [GENOMIC DNA]</scope>
</reference>
<reference key="2">
    <citation type="journal article" date="1988" name="J. Gen. Virol.">
        <title>The complete DNA sequence of the long unique region in the genome of herpes simplex virus type 1.</title>
        <authorList>
            <person name="McGeoch D.J."/>
            <person name="Dalrymple M.A."/>
            <person name="Davison A.J."/>
            <person name="Dolan A."/>
            <person name="Frame M.C."/>
            <person name="McNab D."/>
            <person name="Perry L.J."/>
            <person name="Scott J.E."/>
            <person name="Taylor P."/>
        </authorList>
    </citation>
    <scope>NUCLEOTIDE SEQUENCE [LARGE SCALE GENOMIC DNA]</scope>
</reference>
<reference key="3">
    <citation type="journal article" date="1988" name="Virology">
        <title>Common epitopes of glycoprotein B map within the major DNA-binding proteins of bovine herpesvirus type 2 (BHV-2) and herpes simplex virus type 1 (HSV-1).</title>
        <authorList>
            <person name="Hammerschmidt W."/>
            <person name="Conraths F."/>
            <person name="Mankertz J."/>
            <person name="Buhk H.-J."/>
            <person name="Pauli G."/>
            <person name="Ludwig H."/>
        </authorList>
    </citation>
    <scope>NUCLEOTIDE SEQUENCE [GENOMIC DNA] OF 1062-1196</scope>
</reference>
<reference key="4">
    <citation type="journal article" date="2007" name="Microbes Infect.">
        <title>Determination and analysis of the DNA sequence of highly attenuated herpes simplex virus type 1 mutant HF10, a potential oncolytic virus.</title>
        <authorList>
            <person name="Ushijima Y."/>
            <person name="Luo C."/>
            <person name="Goshima F."/>
            <person name="Yamauchi Y."/>
            <person name="Kimura H."/>
            <person name="Nishiyama Y."/>
        </authorList>
    </citation>
    <scope>NUCLEOTIDE SEQUENCE [LARGE SCALE GENOMIC DNA]</scope>
    <source>
        <strain>Nonneuroinvasive mutant HF10</strain>
    </source>
</reference>
<reference key="5">
    <citation type="submission" date="2008-12" db="EMBL/GenBank/DDBJ databases">
        <title>Herpes simplex virus type 1 bacterial artificial chromosome.</title>
        <authorList>
            <person name="Cunningham C."/>
            <person name="Davison A.J."/>
        </authorList>
    </citation>
    <scope>NUCLEOTIDE SEQUENCE [LARGE SCALE GENOMIC DNA]</scope>
    <source>
        <strain>17 syn+</strain>
    </source>
</reference>
<reference key="6">
    <citation type="journal article" date="1987" name="J. Biol. Chem.">
        <title>Interaction between the DNA polymerase and single-stranded DNA-binding protein (infected cell protein 8) of herpes simplex virus 1.</title>
        <authorList>
            <person name="O'Donnell M.E."/>
            <person name="Elias P."/>
            <person name="Funnell B.E."/>
            <person name="Lehman I.R."/>
        </authorList>
    </citation>
    <scope>INTERACTION WITH DNA POLYMERASE</scope>
    <scope>FUNCTION</scope>
</reference>
<reference key="7">
    <citation type="journal article" date="1994" name="J. Biol. Chem.">
        <title>Association of origin binding protein and single strand DNA-binding protein, ICP8, during herpes simplex virus type 1 DNA replication in vivo.</title>
        <authorList>
            <person name="Boehmer P.E."/>
            <person name="Craigie M.C."/>
            <person name="Stow N.D."/>
            <person name="Lehman I.R."/>
        </authorList>
    </citation>
    <scope>INTERACTION WITH UL9</scope>
    <scope>FUNCTION</scope>
</reference>
<reference key="8">
    <citation type="journal article" date="1997" name="J. Gen. Virol.">
        <title>A functional interaction of ICP8, the herpes simplex virus single-stranded DNA-binding protein, and the helicase-primase complex that is dependent on the presence of the UL8 subunit.</title>
        <authorList>
            <person name="Hamatake R.K."/>
            <person name="Bifano M."/>
            <person name="Hurlburt W.W."/>
            <person name="Tenney D.J."/>
        </authorList>
    </citation>
    <scope>INTERACTION WITH PROTEIN UL8</scope>
    <scope>FUNCTION</scope>
</reference>
<reference key="9">
    <citation type="journal article" date="1997" name="J. Virol.">
        <title>Herpes simplex virus type 1 prereplicative sites are a heterogeneous population: only a subset are likely to be precursors to replication compartments.</title>
        <authorList>
            <person name="Lukonis C.J."/>
            <person name="Burkham J."/>
            <person name="Weller S.K."/>
        </authorList>
    </citation>
    <scope>SUBCELLULAR LOCATION</scope>
</reference>
<reference key="10">
    <citation type="journal article" date="2004" name="J. Virol.">
        <title>The UL12.5 gene product of herpes simplex virus type 1 exhibits nuclease and strand exchange activities but does not localize to the nucleus.</title>
        <authorList>
            <person name="Reuven N.B."/>
            <person name="Antoku S."/>
            <person name="Weller S.K."/>
        </authorList>
    </citation>
    <scope>INTERACTION WITH UL12</scope>
    <scope>FUNCTION</scope>
</reference>
<reference key="11">
    <citation type="journal article" date="2005" name="Virology">
        <title>Evidence for a direct interaction between HSV-1 ICP27 and ICP8 proteins.</title>
        <authorList>
            <person name="Olesky M."/>
            <person name="McNamee E.E."/>
            <person name="Zhou C."/>
            <person name="Taylor T.J."/>
            <person name="Knipe D.M."/>
        </authorList>
    </citation>
    <scope>INTERACTION WITH ICP27</scope>
</reference>
<reference key="12">
    <citation type="journal article" date="2015" name="J. Virol.">
        <title>ICP8 filament Formation Is Essential for Replication Compartment Formation during Herpes Simplex Virus Infection.</title>
        <authorList>
            <person name="Darwish A.S."/>
            <person name="Grady L.M."/>
            <person name="Bai P."/>
            <person name="Weller S.K."/>
        </authorList>
    </citation>
    <scope>FUNCTION</scope>
    <scope>SUBCELLULAR LOCATION</scope>
    <scope>SUBUNIT</scope>
</reference>
<reference key="13">
    <citation type="journal article" date="2005" name="J. Biol. Chem.">
        <title>The crystal structure of the herpes simplex virus 1 ssDNA-binding protein suggests the structural basis for flexible, cooperative single-stranded DNA binding.</title>
        <authorList>
            <person name="Mapelli M."/>
            <person name="Panjikar S."/>
            <person name="Tucker P.A."/>
        </authorList>
    </citation>
    <scope>X-RAY CRYSTALLOGRAPHY (3.0 ANGSTROMS) OF 1-1136</scope>
</reference>
<keyword id="KW-0002">3D-structure</keyword>
<keyword id="KW-0235">DNA replication</keyword>
<keyword id="KW-0238">DNA-binding</keyword>
<keyword id="KW-1048">Host nucleus</keyword>
<keyword id="KW-0479">Metal-binding</keyword>
<keyword id="KW-1185">Reference proteome</keyword>
<keyword id="KW-0862">Zinc</keyword>
<keyword id="KW-0863">Zinc-finger</keyword>
<gene>
    <name evidence="1" type="primary">DBP</name>
    <name type="synonym">ICP8</name>
    <name type="ORF">UL29</name>
</gene>
<accession>P04296</accession>
<accession>B9VQF7</accession>
<accession>Q09IA4</accession>
<proteinExistence type="evidence at protein level"/>
<protein>
    <recommendedName>
        <fullName evidence="1">Major DNA-binding protein</fullName>
    </recommendedName>
</protein>
<dbReference type="EMBL" id="X14112">
    <property type="protein sequence ID" value="CAA32322.1"/>
    <property type="molecule type" value="Genomic_DNA"/>
</dbReference>
<dbReference type="EMBL" id="X03181">
    <property type="protein sequence ID" value="CAA26940.1"/>
    <property type="molecule type" value="Genomic_DNA"/>
</dbReference>
<dbReference type="EMBL" id="AH002357">
    <property type="protein sequence ID" value="AAA45787.1"/>
    <property type="molecule type" value="Genomic_DNA"/>
</dbReference>
<dbReference type="EMBL" id="DQ889502">
    <property type="protein sequence ID" value="ABI63491.1"/>
    <property type="molecule type" value="Genomic_DNA"/>
</dbReference>
<dbReference type="EMBL" id="FJ593289">
    <property type="protein sequence ID" value="ACM62252.1"/>
    <property type="molecule type" value="Genomic_DNA"/>
</dbReference>
<dbReference type="PIR" id="A03790">
    <property type="entry name" value="DNBEV1"/>
</dbReference>
<dbReference type="RefSeq" id="YP_009137104.1">
    <property type="nucleotide sequence ID" value="NC_001806.2"/>
</dbReference>
<dbReference type="PDB" id="1URJ">
    <property type="method" value="X-ray"/>
    <property type="resolution" value="3.00 A"/>
    <property type="chains" value="A/B=1-1136"/>
</dbReference>
<dbReference type="PDBsum" id="1URJ"/>
<dbReference type="SMR" id="P04296"/>
<dbReference type="BioGRID" id="971471">
    <property type="interactions" value="23"/>
</dbReference>
<dbReference type="ELM" id="P04296"/>
<dbReference type="IntAct" id="P04296">
    <property type="interactions" value="53"/>
</dbReference>
<dbReference type="MINT" id="P04296"/>
<dbReference type="GeneID" id="2703458"/>
<dbReference type="KEGG" id="vg:2703458"/>
<dbReference type="EvolutionaryTrace" id="P04296"/>
<dbReference type="Proteomes" id="UP000009294">
    <property type="component" value="Segment"/>
</dbReference>
<dbReference type="Proteomes" id="UP000180652">
    <property type="component" value="Segment"/>
</dbReference>
<dbReference type="GO" id="GO:0042025">
    <property type="term" value="C:host cell nucleus"/>
    <property type="evidence" value="ECO:0000314"/>
    <property type="project" value="UniProtKB"/>
</dbReference>
<dbReference type="GO" id="GO:0039715">
    <property type="term" value="C:nuclear viral factory"/>
    <property type="evidence" value="ECO:0000314"/>
    <property type="project" value="UniProtKB"/>
</dbReference>
<dbReference type="GO" id="GO:0003677">
    <property type="term" value="F:DNA binding"/>
    <property type="evidence" value="ECO:0000314"/>
    <property type="project" value="UniProtKB"/>
</dbReference>
<dbReference type="GO" id="GO:0003697">
    <property type="term" value="F:single-stranded DNA binding"/>
    <property type="evidence" value="ECO:0007669"/>
    <property type="project" value="InterPro"/>
</dbReference>
<dbReference type="GO" id="GO:0008270">
    <property type="term" value="F:zinc ion binding"/>
    <property type="evidence" value="ECO:0007669"/>
    <property type="project" value="UniProtKB-KW"/>
</dbReference>
<dbReference type="GO" id="GO:0039686">
    <property type="term" value="P:bidirectional double-stranded viral DNA replication"/>
    <property type="evidence" value="ECO:0000314"/>
    <property type="project" value="UniProtKB"/>
</dbReference>
<dbReference type="GO" id="GO:0006260">
    <property type="term" value="P:DNA replication"/>
    <property type="evidence" value="ECO:0007669"/>
    <property type="project" value="UniProtKB-KW"/>
</dbReference>
<dbReference type="FunFam" id="1.20.190.40:FF:000001">
    <property type="entry name" value="Major DNA-binding protein"/>
    <property type="match status" value="1"/>
</dbReference>
<dbReference type="FunFam" id="1.20.190.40:FF:000002">
    <property type="entry name" value="Major DNA-binding protein"/>
    <property type="match status" value="1"/>
</dbReference>
<dbReference type="Gene3D" id="1.10.150.560">
    <property type="match status" value="1"/>
</dbReference>
<dbReference type="Gene3D" id="1.20.190.40">
    <property type="entry name" value="Viral ssDNA binding protein, head domain"/>
    <property type="match status" value="2"/>
</dbReference>
<dbReference type="HAMAP" id="MF_04007">
    <property type="entry name" value="HSV_DNBI"/>
    <property type="match status" value="1"/>
</dbReference>
<dbReference type="InterPro" id="IPR035989">
    <property type="entry name" value="DBP_sf"/>
</dbReference>
<dbReference type="InterPro" id="IPR043031">
    <property type="entry name" value="Viral_ssDBP_head"/>
</dbReference>
<dbReference type="InterPro" id="IPR000635">
    <property type="entry name" value="Viral_ssDNA-bd"/>
</dbReference>
<dbReference type="Pfam" id="PF00747">
    <property type="entry name" value="Viral_DNA_bp"/>
    <property type="match status" value="1"/>
</dbReference>
<dbReference type="SUPFAM" id="SSF118208">
    <property type="entry name" value="Viral ssDNA binding protein"/>
    <property type="match status" value="1"/>
</dbReference>
<sequence>METKPKTATTIKVPPGPLGYVYARACPSEGIELLALLSARSGDSDVAVAPLVVGLTVESGFEANVAVVVGSRTTGLGGTAVSLKLTPSHYSSSVYVFHGGRHLDPSTQAPNLTRLCERARRHFGFSDYTPRPGDLKHETTGEALCERLGLDPDRALLYLVVTEGFKEAVCINNTFLHLGGSDKVTIGGAEVHRIPVYPLQLFMPDFSRVIAEPFNANHRSIGEKFTYPLPFFNRPLNRLLFEAVVGPAAVALRCRNVDAVARAAAHLAFDENHEGAALPADITFTAFEASQGKTPRGGRDGGGKGAAGGFEQRLASVMAGDAALALESIVSMAVFDEPPTDISAWPLFEGQDTAAARANAVGAYLARAAGLVGAMVFSTNSALHLTEVDDAGPADPKDHSKPSFYRFFLVPGTHVAANPQVDREGHVVPGFEGRPTAPLVGGTQEFAGEHLAMLCGFSPALLAKMLFYLERCDGAVIVGRQEMDVFRYVADSNQTDVPCNLCTFDTRHACVHTTLMRLRARHPKFASAARGAIGVFGTMNSMYSDCDVLGNYAAFSALKRADGSETARTIMQETYRAATERVMAELETLQYVDQAVPTAMGRLETIITNREALHTVVNNVRQVVDREVEQLMRNLVEGRNFKFRDGLGEANHAMSLTLDPYACGPCPLLQLLGRRSNLAVYQDLALSQCHGVFAGQSVEGRNFRNQFQPVLRRRVMDMFNNGFLSAKTLTVALSEGAAICAPSLTAGQTAPAESSFEGDVARVTLGFPKELRVKSRVLFAGASANASEAAKARVASLQSAYQKPDKRVDILLGPLGFLLKQFHAAIFPNGKPPGSNQPNPQWFWTALQRNQLPARLLSREDIETIAFIKKFSLDYGAINFINLAPNNVSELAMYYMANQILRYCDHSTYFINTLTAIIAGSRRPPSVQAAAAWSAQGGAGLEAGARALMDAVDAHPGAWTSMFASCNLLRPVMAARPMVVLGLSISKYYGMAGNDRVFQAGNWASLMGGKNACPLLIFDRTRKFVLACPRAGFVCAASSLGGGAHESSLCEQLRGIISEGGAAVASSVFVATVKSLGPRTQQLQIEDWLALLEDEYLSEEMMELTARALERGNGEWSTDAALEVAHEAEALVSQLGNAGEVFNFGDFGCEDDNATPFGGPGAPGPAFAGRKRAFHGDDPFGEGPPDKKGDLTLDML</sequence>